<protein>
    <recommendedName>
        <fullName evidence="1">Protein PB1-F2</fullName>
    </recommendedName>
</protein>
<evidence type="ECO:0000255" key="1">
    <source>
        <dbReference type="HAMAP-Rule" id="MF_04064"/>
    </source>
</evidence>
<keyword id="KW-0053">Apoptosis</keyword>
<keyword id="KW-1035">Host cytoplasm</keyword>
<keyword id="KW-1043">Host membrane</keyword>
<keyword id="KW-1045">Host mitochondrion</keyword>
<keyword id="KW-1046">Host mitochondrion inner membrane</keyword>
<keyword id="KW-1048">Host nucleus</keyword>
<keyword id="KW-0945">Host-virus interaction</keyword>
<keyword id="KW-1090">Inhibition of host innate immune response by virus</keyword>
<keyword id="KW-1097">Inhibition of host MAVS by virus</keyword>
<keyword id="KW-1113">Inhibition of host RLR pathway by virus</keyword>
<keyword id="KW-0472">Membrane</keyword>
<keyword id="KW-1119">Modulation of host cell apoptosis by virus</keyword>
<keyword id="KW-0899">Viral immunoevasion</keyword>
<accession>Q0A2D8</accession>
<gene>
    <name evidence="1" type="primary">PB1</name>
</gene>
<name>PB1F2_I66A0</name>
<feature type="chain" id="PRO_0000278725" description="Protein PB1-F2">
    <location>
        <begin position="1"/>
        <end position="90"/>
    </location>
</feature>
<feature type="region of interest" description="Mitochondrial targeting sequence" evidence="1">
    <location>
        <begin position="65"/>
        <end position="87"/>
    </location>
</feature>
<feature type="site" description="High pathogenicity" evidence="1">
    <location>
        <position position="66"/>
    </location>
</feature>
<reference key="1">
    <citation type="journal article" date="2006" name="Science">
        <title>Large-scale sequence analysis of avian influenza isolates.</title>
        <authorList>
            <person name="Obenauer J.C."/>
            <person name="Denson J."/>
            <person name="Mehta P.K."/>
            <person name="Su X."/>
            <person name="Mukatira S."/>
            <person name="Finkelstein D.B."/>
            <person name="Xu X."/>
            <person name="Wang J."/>
            <person name="Ma J."/>
            <person name="Fan Y."/>
            <person name="Rakestraw K.M."/>
            <person name="Webster R.G."/>
            <person name="Hoffmann E."/>
            <person name="Krauss S."/>
            <person name="Zheng J."/>
            <person name="Zhang Z."/>
            <person name="Naeve C.W."/>
        </authorList>
    </citation>
    <scope>NUCLEOTIDE SEQUENCE [GENOMIC RNA]</scope>
</reference>
<comment type="function">
    <text evidence="1">Plays an important role in promoting lung pathology in both primary viral infection and secondary bacterial infection. Promotes alteration of mitochondrial morphology, dissipation of mitochondrial membrane potential, and cell death. Alternatively, inhibits the production of interferon in the infected cell at the level of host mitochondrial antiviral signaling MAVS. Its level of expression differs greatly depending on which cell type is infected, in a manner that is independent of the levels of expression of other viral proteins. Monocytic cells are more affected than epithelial cells. Seems to disable virus-infected monocytes or other host innate immune cells. During early stage of infection, predisposes the mitochondria to permeability transition through interaction with host SLC25A6/ANT3 and VDAC1. These proteins participate in the formation of the permeability transition pore complex (PTPC) responsible of the release of mitochondrial products that triggers apoptosis.</text>
</comment>
<comment type="subunit">
    <text evidence="1">Oligomer. Interacts with human SLC25A6/ANT3 and VDAC1. Interacts with host MAVS.</text>
</comment>
<comment type="subcellular location">
    <subcellularLocation>
        <location evidence="1">Host mitochondrion inner membrane</location>
    </subcellularLocation>
    <subcellularLocation>
        <location evidence="1">Host nucleus</location>
    </subcellularLocation>
    <subcellularLocation>
        <location evidence="1">Host cytoplasm</location>
        <location evidence="1">Host cytosol</location>
    </subcellularLocation>
    <text evidence="1">Inner mitochondrial membrane in most cells types. Otherwise is detected in the nucleus and cytosol.</text>
</comment>
<comment type="miscellaneous">
    <text>Is not encoded in all strains, and seems to be dispensable for replication.</text>
</comment>
<comment type="similarity">
    <text evidence="1">Belongs to the influenza viruses PB1-F2 family.</text>
</comment>
<organismHost>
    <name type="scientific">Aves</name>
    <dbReference type="NCBI Taxonomy" id="8782"/>
</organismHost>
<sequence>MEQEQDTPWIQSTGHINIQKRENGQQTLKLEHHNSIQLMDHCPKTMNRAVMLKQTVCWRQWLFLRSPTPVSLKTHVLRRWKSFSKHGWTN</sequence>
<organism>
    <name type="scientific">Influenza A virus (strain A/Turkey/Ontario/7732/1966 H5N9)</name>
    <dbReference type="NCBI Taxonomy" id="380301"/>
    <lineage>
        <taxon>Viruses</taxon>
        <taxon>Riboviria</taxon>
        <taxon>Orthornavirae</taxon>
        <taxon>Negarnaviricota</taxon>
        <taxon>Polyploviricotina</taxon>
        <taxon>Insthoviricetes</taxon>
        <taxon>Articulavirales</taxon>
        <taxon>Orthomyxoviridae</taxon>
        <taxon>Alphainfluenzavirus</taxon>
        <taxon>Alphainfluenzavirus influenzae</taxon>
        <taxon>Influenza A virus</taxon>
    </lineage>
</organism>
<dbReference type="EMBL" id="CY015107">
    <property type="protein sequence ID" value="ABI85144.1"/>
    <property type="molecule type" value="Genomic_RNA"/>
</dbReference>
<dbReference type="SMR" id="Q0A2D8"/>
<dbReference type="GO" id="GO:0044164">
    <property type="term" value="C:host cell cytosol"/>
    <property type="evidence" value="ECO:0007669"/>
    <property type="project" value="UniProtKB-SubCell"/>
</dbReference>
<dbReference type="GO" id="GO:0044192">
    <property type="term" value="C:host cell mitochondrial inner membrane"/>
    <property type="evidence" value="ECO:0007669"/>
    <property type="project" value="UniProtKB-SubCell"/>
</dbReference>
<dbReference type="GO" id="GO:0042025">
    <property type="term" value="C:host cell nucleus"/>
    <property type="evidence" value="ECO:0007669"/>
    <property type="project" value="UniProtKB-SubCell"/>
</dbReference>
<dbReference type="GO" id="GO:0016020">
    <property type="term" value="C:membrane"/>
    <property type="evidence" value="ECO:0007669"/>
    <property type="project" value="UniProtKB-UniRule"/>
</dbReference>
<dbReference type="GO" id="GO:0052150">
    <property type="term" value="P:symbiont-mediated perturbation of host apoptosis"/>
    <property type="evidence" value="ECO:0007669"/>
    <property type="project" value="UniProtKB-KW"/>
</dbReference>
<dbReference type="GO" id="GO:0039545">
    <property type="term" value="P:symbiont-mediated suppression of host cytoplasmic pattern recognition receptor signaling pathway via inhibition of MAVS activity"/>
    <property type="evidence" value="ECO:0007669"/>
    <property type="project" value="UniProtKB-KW"/>
</dbReference>
<dbReference type="HAMAP" id="MF_04064">
    <property type="entry name" value="INFV_PB1F2"/>
    <property type="match status" value="1"/>
</dbReference>
<dbReference type="InterPro" id="IPR021045">
    <property type="entry name" value="Flu_proapoptotic_PB1-F2"/>
</dbReference>
<dbReference type="Pfam" id="PF11986">
    <property type="entry name" value="PB1-F2"/>
    <property type="match status" value="1"/>
</dbReference>
<proteinExistence type="inferred from homology"/>